<gene>
    <name evidence="1" type="primary">rph</name>
    <name type="ordered locus">ECSE_3923</name>
</gene>
<reference key="1">
    <citation type="journal article" date="2008" name="DNA Res.">
        <title>Complete genome sequence and comparative analysis of the wild-type commensal Escherichia coli strain SE11 isolated from a healthy adult.</title>
        <authorList>
            <person name="Oshima K."/>
            <person name="Toh H."/>
            <person name="Ogura Y."/>
            <person name="Sasamoto H."/>
            <person name="Morita H."/>
            <person name="Park S.-H."/>
            <person name="Ooka T."/>
            <person name="Iyoda S."/>
            <person name="Taylor T.D."/>
            <person name="Hayashi T."/>
            <person name="Itoh K."/>
            <person name="Hattori M."/>
        </authorList>
    </citation>
    <scope>NUCLEOTIDE SEQUENCE [LARGE SCALE GENOMIC DNA]</scope>
    <source>
        <strain>SE11</strain>
    </source>
</reference>
<accession>B6I3M0</accession>
<organism>
    <name type="scientific">Escherichia coli (strain SE11)</name>
    <dbReference type="NCBI Taxonomy" id="409438"/>
    <lineage>
        <taxon>Bacteria</taxon>
        <taxon>Pseudomonadati</taxon>
        <taxon>Pseudomonadota</taxon>
        <taxon>Gammaproteobacteria</taxon>
        <taxon>Enterobacterales</taxon>
        <taxon>Enterobacteriaceae</taxon>
        <taxon>Escherichia</taxon>
    </lineage>
</organism>
<proteinExistence type="inferred from homology"/>
<name>RNPH_ECOSE</name>
<comment type="function">
    <text evidence="1">Phosphorolytic 3'-5' exoribonuclease that plays an important role in tRNA 3'-end maturation. Removes nucleotide residues following the 3'-CCA terminus of tRNAs; can also add nucleotides to the ends of RNA molecules by using nucleoside diphosphates as substrates, but this may not be physiologically important. Probably plays a role in initiation of 16S rRNA degradation (leading to ribosome degradation) during starvation.</text>
</comment>
<comment type="catalytic activity">
    <reaction evidence="1">
        <text>tRNA(n+1) + phosphate = tRNA(n) + a ribonucleoside 5'-diphosphate</text>
        <dbReference type="Rhea" id="RHEA:10628"/>
        <dbReference type="Rhea" id="RHEA-COMP:17343"/>
        <dbReference type="Rhea" id="RHEA-COMP:17344"/>
        <dbReference type="ChEBI" id="CHEBI:43474"/>
        <dbReference type="ChEBI" id="CHEBI:57930"/>
        <dbReference type="ChEBI" id="CHEBI:173114"/>
        <dbReference type="EC" id="2.7.7.56"/>
    </reaction>
</comment>
<comment type="subunit">
    <text evidence="1">Homohexameric ring arranged as a trimer of dimers.</text>
</comment>
<comment type="similarity">
    <text evidence="1">Belongs to the RNase PH family.</text>
</comment>
<feature type="chain" id="PRO_1000129340" description="Ribonuclease PH">
    <location>
        <begin position="1"/>
        <end position="238"/>
    </location>
</feature>
<feature type="binding site" evidence="1">
    <location>
        <position position="86"/>
    </location>
    <ligand>
        <name>phosphate</name>
        <dbReference type="ChEBI" id="CHEBI:43474"/>
        <note>substrate</note>
    </ligand>
</feature>
<feature type="binding site" evidence="1">
    <location>
        <begin position="124"/>
        <end position="126"/>
    </location>
    <ligand>
        <name>phosphate</name>
        <dbReference type="ChEBI" id="CHEBI:43474"/>
        <note>substrate</note>
    </ligand>
</feature>
<protein>
    <recommendedName>
        <fullName evidence="1">Ribonuclease PH</fullName>
        <shortName evidence="1">RNase PH</shortName>
        <ecNumber evidence="1">2.7.7.56</ecNumber>
    </recommendedName>
    <alternativeName>
        <fullName evidence="1">tRNA nucleotidyltransferase</fullName>
    </alternativeName>
</protein>
<keyword id="KW-0548">Nucleotidyltransferase</keyword>
<keyword id="KW-0694">RNA-binding</keyword>
<keyword id="KW-0698">rRNA processing</keyword>
<keyword id="KW-0808">Transferase</keyword>
<keyword id="KW-0819">tRNA processing</keyword>
<keyword id="KW-0820">tRNA-binding</keyword>
<dbReference type="EC" id="2.7.7.56" evidence="1"/>
<dbReference type="EMBL" id="AP009240">
    <property type="protein sequence ID" value="BAG79447.1"/>
    <property type="molecule type" value="Genomic_DNA"/>
</dbReference>
<dbReference type="RefSeq" id="WP_001247093.1">
    <property type="nucleotide sequence ID" value="NC_011415.1"/>
</dbReference>
<dbReference type="SMR" id="B6I3M0"/>
<dbReference type="GeneID" id="93778358"/>
<dbReference type="KEGG" id="ecy:ECSE_3923"/>
<dbReference type="HOGENOM" id="CLU_050858_0_0_6"/>
<dbReference type="Proteomes" id="UP000008199">
    <property type="component" value="Chromosome"/>
</dbReference>
<dbReference type="GO" id="GO:0000175">
    <property type="term" value="F:3'-5'-RNA exonuclease activity"/>
    <property type="evidence" value="ECO:0007669"/>
    <property type="project" value="UniProtKB-UniRule"/>
</dbReference>
<dbReference type="GO" id="GO:0000049">
    <property type="term" value="F:tRNA binding"/>
    <property type="evidence" value="ECO:0007669"/>
    <property type="project" value="UniProtKB-UniRule"/>
</dbReference>
<dbReference type="GO" id="GO:0009022">
    <property type="term" value="F:tRNA nucleotidyltransferase activity"/>
    <property type="evidence" value="ECO:0007669"/>
    <property type="project" value="UniProtKB-UniRule"/>
</dbReference>
<dbReference type="GO" id="GO:0016075">
    <property type="term" value="P:rRNA catabolic process"/>
    <property type="evidence" value="ECO:0007669"/>
    <property type="project" value="UniProtKB-UniRule"/>
</dbReference>
<dbReference type="GO" id="GO:0006364">
    <property type="term" value="P:rRNA processing"/>
    <property type="evidence" value="ECO:0007669"/>
    <property type="project" value="UniProtKB-KW"/>
</dbReference>
<dbReference type="GO" id="GO:0008033">
    <property type="term" value="P:tRNA processing"/>
    <property type="evidence" value="ECO:0007669"/>
    <property type="project" value="UniProtKB-UniRule"/>
</dbReference>
<dbReference type="CDD" id="cd11362">
    <property type="entry name" value="RNase_PH_bact"/>
    <property type="match status" value="1"/>
</dbReference>
<dbReference type="FunFam" id="3.30.230.70:FF:000003">
    <property type="entry name" value="Ribonuclease PH"/>
    <property type="match status" value="1"/>
</dbReference>
<dbReference type="Gene3D" id="3.30.230.70">
    <property type="entry name" value="GHMP Kinase, N-terminal domain"/>
    <property type="match status" value="1"/>
</dbReference>
<dbReference type="HAMAP" id="MF_00564">
    <property type="entry name" value="RNase_PH"/>
    <property type="match status" value="1"/>
</dbReference>
<dbReference type="InterPro" id="IPR001247">
    <property type="entry name" value="ExoRNase_PH_dom1"/>
</dbReference>
<dbReference type="InterPro" id="IPR015847">
    <property type="entry name" value="ExoRNase_PH_dom2"/>
</dbReference>
<dbReference type="InterPro" id="IPR036345">
    <property type="entry name" value="ExoRNase_PH_dom2_sf"/>
</dbReference>
<dbReference type="InterPro" id="IPR027408">
    <property type="entry name" value="PNPase/RNase_PH_dom_sf"/>
</dbReference>
<dbReference type="InterPro" id="IPR020568">
    <property type="entry name" value="Ribosomal_Su5_D2-typ_SF"/>
</dbReference>
<dbReference type="InterPro" id="IPR050080">
    <property type="entry name" value="RNase_PH"/>
</dbReference>
<dbReference type="InterPro" id="IPR002381">
    <property type="entry name" value="RNase_PH_bac-type"/>
</dbReference>
<dbReference type="InterPro" id="IPR018336">
    <property type="entry name" value="RNase_PH_CS"/>
</dbReference>
<dbReference type="NCBIfam" id="TIGR01966">
    <property type="entry name" value="RNasePH"/>
    <property type="match status" value="1"/>
</dbReference>
<dbReference type="PANTHER" id="PTHR11953">
    <property type="entry name" value="EXOSOME COMPLEX COMPONENT"/>
    <property type="match status" value="1"/>
</dbReference>
<dbReference type="PANTHER" id="PTHR11953:SF0">
    <property type="entry name" value="EXOSOME COMPLEX COMPONENT RRP41"/>
    <property type="match status" value="1"/>
</dbReference>
<dbReference type="Pfam" id="PF01138">
    <property type="entry name" value="RNase_PH"/>
    <property type="match status" value="1"/>
</dbReference>
<dbReference type="Pfam" id="PF03725">
    <property type="entry name" value="RNase_PH_C"/>
    <property type="match status" value="1"/>
</dbReference>
<dbReference type="SUPFAM" id="SSF55666">
    <property type="entry name" value="Ribonuclease PH domain 2-like"/>
    <property type="match status" value="1"/>
</dbReference>
<dbReference type="SUPFAM" id="SSF54211">
    <property type="entry name" value="Ribosomal protein S5 domain 2-like"/>
    <property type="match status" value="1"/>
</dbReference>
<dbReference type="PROSITE" id="PS01277">
    <property type="entry name" value="RIBONUCLEASE_PH"/>
    <property type="match status" value="1"/>
</dbReference>
<sequence>MRPAGRSNNQVRPVTLTRNYTKHAEGSVLVEFGDTKVLCTASIEEGVPRFLKGQGQGWITAEYGMLPRSTHTRNAREAAKGKQGGRTMEIQRLIARALRAAVDLKALGEFTITLDCDVLQADGGTRTASITGACVALADALQKLVENGKLKTNPMKGMVAAVSVGIVNGEAVCDLEYVEDSAAETDMNVVMTEDGRIIEVQGTAEGEPFTHEELLTLLALARGGIESIVATQKAALAN</sequence>
<evidence type="ECO:0000255" key="1">
    <source>
        <dbReference type="HAMAP-Rule" id="MF_00564"/>
    </source>
</evidence>